<comment type="function">
    <text evidence="1">Forms part of the ribosomal stalk which helps the ribosome interact with GTP-bound translation factors.</text>
</comment>
<comment type="subunit">
    <text evidence="1">Part of the ribosomal stalk of the 50S ribosomal subunit. Interacts with L10 and the large rRNA to form the base of the stalk. L10 forms an elongated spine to which L12 dimers bind in a sequential fashion forming a multimeric L10(L12)X complex.</text>
</comment>
<comment type="PTM">
    <text evidence="1">One or more lysine residues are methylated.</text>
</comment>
<comment type="similarity">
    <text evidence="1">Belongs to the universal ribosomal protein uL11 family.</text>
</comment>
<organism>
    <name type="scientific">Staphylococcus aureus (strain MSSA476)</name>
    <dbReference type="NCBI Taxonomy" id="282459"/>
    <lineage>
        <taxon>Bacteria</taxon>
        <taxon>Bacillati</taxon>
        <taxon>Bacillota</taxon>
        <taxon>Bacilli</taxon>
        <taxon>Bacillales</taxon>
        <taxon>Staphylococcaceae</taxon>
        <taxon>Staphylococcus</taxon>
    </lineage>
</organism>
<evidence type="ECO:0000255" key="1">
    <source>
        <dbReference type="HAMAP-Rule" id="MF_00736"/>
    </source>
</evidence>
<evidence type="ECO:0000305" key="2"/>
<gene>
    <name evidence="1" type="primary">rplK</name>
    <name type="ordered locus">SAS0495</name>
</gene>
<name>RL11_STAAS</name>
<reference key="1">
    <citation type="journal article" date="2004" name="Proc. Natl. Acad. Sci. U.S.A.">
        <title>Complete genomes of two clinical Staphylococcus aureus strains: evidence for the rapid evolution of virulence and drug resistance.</title>
        <authorList>
            <person name="Holden M.T.G."/>
            <person name="Feil E.J."/>
            <person name="Lindsay J.A."/>
            <person name="Peacock S.J."/>
            <person name="Day N.P.J."/>
            <person name="Enright M.C."/>
            <person name="Foster T.J."/>
            <person name="Moore C.E."/>
            <person name="Hurst L."/>
            <person name="Atkin R."/>
            <person name="Barron A."/>
            <person name="Bason N."/>
            <person name="Bentley S.D."/>
            <person name="Chillingworth C."/>
            <person name="Chillingworth T."/>
            <person name="Churcher C."/>
            <person name="Clark L."/>
            <person name="Corton C."/>
            <person name="Cronin A."/>
            <person name="Doggett J."/>
            <person name="Dowd L."/>
            <person name="Feltwell T."/>
            <person name="Hance Z."/>
            <person name="Harris B."/>
            <person name="Hauser H."/>
            <person name="Holroyd S."/>
            <person name="Jagels K."/>
            <person name="James K.D."/>
            <person name="Lennard N."/>
            <person name="Line A."/>
            <person name="Mayes R."/>
            <person name="Moule S."/>
            <person name="Mungall K."/>
            <person name="Ormond D."/>
            <person name="Quail M.A."/>
            <person name="Rabbinowitsch E."/>
            <person name="Rutherford K.M."/>
            <person name="Sanders M."/>
            <person name="Sharp S."/>
            <person name="Simmonds M."/>
            <person name="Stevens K."/>
            <person name="Whitehead S."/>
            <person name="Barrell B.G."/>
            <person name="Spratt B.G."/>
            <person name="Parkhill J."/>
        </authorList>
    </citation>
    <scope>NUCLEOTIDE SEQUENCE [LARGE SCALE GENOMIC DNA]</scope>
    <source>
        <strain>MSSA476</strain>
    </source>
</reference>
<protein>
    <recommendedName>
        <fullName evidence="1">Large ribosomal subunit protein uL11</fullName>
    </recommendedName>
    <alternativeName>
        <fullName evidence="2">50S ribosomal protein L11</fullName>
    </alternativeName>
</protein>
<proteinExistence type="inferred from homology"/>
<sequence>MAKKVDKVVKLQIPAGKANPAPPVGPALGQAGVNIMGFCKEFNARTQDQAGLIIPVEISVYEDRSFTFITKTPPAPVLLKKAAGIEKGSGEPNKTKVATVTKDQVREIANSKMQDLNAADEEAAMRIIEGTARSMGIVVE</sequence>
<dbReference type="EMBL" id="BX571857">
    <property type="protein sequence ID" value="CAG42270.1"/>
    <property type="molecule type" value="Genomic_DNA"/>
</dbReference>
<dbReference type="RefSeq" id="WP_001085792.1">
    <property type="nucleotide sequence ID" value="NC_002953.3"/>
</dbReference>
<dbReference type="SMR" id="Q6GBV0"/>
<dbReference type="GeneID" id="98344871"/>
<dbReference type="KEGG" id="sas:SAS0495"/>
<dbReference type="HOGENOM" id="CLU_074237_2_1_9"/>
<dbReference type="GO" id="GO:0022625">
    <property type="term" value="C:cytosolic large ribosomal subunit"/>
    <property type="evidence" value="ECO:0007669"/>
    <property type="project" value="TreeGrafter"/>
</dbReference>
<dbReference type="GO" id="GO:0070180">
    <property type="term" value="F:large ribosomal subunit rRNA binding"/>
    <property type="evidence" value="ECO:0007669"/>
    <property type="project" value="UniProtKB-UniRule"/>
</dbReference>
<dbReference type="GO" id="GO:0003735">
    <property type="term" value="F:structural constituent of ribosome"/>
    <property type="evidence" value="ECO:0007669"/>
    <property type="project" value="InterPro"/>
</dbReference>
<dbReference type="GO" id="GO:0006412">
    <property type="term" value="P:translation"/>
    <property type="evidence" value="ECO:0007669"/>
    <property type="project" value="UniProtKB-UniRule"/>
</dbReference>
<dbReference type="CDD" id="cd00349">
    <property type="entry name" value="Ribosomal_L11"/>
    <property type="match status" value="1"/>
</dbReference>
<dbReference type="FunFam" id="1.10.10.250:FF:000001">
    <property type="entry name" value="50S ribosomal protein L11"/>
    <property type="match status" value="1"/>
</dbReference>
<dbReference type="FunFam" id="3.30.1550.10:FF:000001">
    <property type="entry name" value="50S ribosomal protein L11"/>
    <property type="match status" value="1"/>
</dbReference>
<dbReference type="Gene3D" id="1.10.10.250">
    <property type="entry name" value="Ribosomal protein L11, C-terminal domain"/>
    <property type="match status" value="1"/>
</dbReference>
<dbReference type="Gene3D" id="3.30.1550.10">
    <property type="entry name" value="Ribosomal protein L11/L12, N-terminal domain"/>
    <property type="match status" value="1"/>
</dbReference>
<dbReference type="HAMAP" id="MF_00736">
    <property type="entry name" value="Ribosomal_uL11"/>
    <property type="match status" value="1"/>
</dbReference>
<dbReference type="InterPro" id="IPR000911">
    <property type="entry name" value="Ribosomal_uL11"/>
</dbReference>
<dbReference type="InterPro" id="IPR006519">
    <property type="entry name" value="Ribosomal_uL11_bac-typ"/>
</dbReference>
<dbReference type="InterPro" id="IPR020783">
    <property type="entry name" value="Ribosomal_uL11_C"/>
</dbReference>
<dbReference type="InterPro" id="IPR036769">
    <property type="entry name" value="Ribosomal_uL11_C_sf"/>
</dbReference>
<dbReference type="InterPro" id="IPR020785">
    <property type="entry name" value="Ribosomal_uL11_CS"/>
</dbReference>
<dbReference type="InterPro" id="IPR020784">
    <property type="entry name" value="Ribosomal_uL11_N"/>
</dbReference>
<dbReference type="InterPro" id="IPR036796">
    <property type="entry name" value="Ribosomal_uL11_N_sf"/>
</dbReference>
<dbReference type="NCBIfam" id="TIGR01632">
    <property type="entry name" value="L11_bact"/>
    <property type="match status" value="1"/>
</dbReference>
<dbReference type="PANTHER" id="PTHR11661">
    <property type="entry name" value="60S RIBOSOMAL PROTEIN L12"/>
    <property type="match status" value="1"/>
</dbReference>
<dbReference type="PANTHER" id="PTHR11661:SF1">
    <property type="entry name" value="LARGE RIBOSOMAL SUBUNIT PROTEIN UL11M"/>
    <property type="match status" value="1"/>
</dbReference>
<dbReference type="Pfam" id="PF00298">
    <property type="entry name" value="Ribosomal_L11"/>
    <property type="match status" value="1"/>
</dbReference>
<dbReference type="Pfam" id="PF03946">
    <property type="entry name" value="Ribosomal_L11_N"/>
    <property type="match status" value="1"/>
</dbReference>
<dbReference type="SMART" id="SM00649">
    <property type="entry name" value="RL11"/>
    <property type="match status" value="1"/>
</dbReference>
<dbReference type="SUPFAM" id="SSF54747">
    <property type="entry name" value="Ribosomal L11/L12e N-terminal domain"/>
    <property type="match status" value="1"/>
</dbReference>
<dbReference type="SUPFAM" id="SSF46906">
    <property type="entry name" value="Ribosomal protein L11, C-terminal domain"/>
    <property type="match status" value="1"/>
</dbReference>
<dbReference type="PROSITE" id="PS00359">
    <property type="entry name" value="RIBOSOMAL_L11"/>
    <property type="match status" value="1"/>
</dbReference>
<accession>Q6GBV0</accession>
<feature type="chain" id="PRO_0000104366" description="Large ribosomal subunit protein uL11">
    <location>
        <begin position="1"/>
        <end position="140"/>
    </location>
</feature>
<keyword id="KW-0488">Methylation</keyword>
<keyword id="KW-0687">Ribonucleoprotein</keyword>
<keyword id="KW-0689">Ribosomal protein</keyword>
<keyword id="KW-0694">RNA-binding</keyword>
<keyword id="KW-0699">rRNA-binding</keyword>